<keyword id="KW-0963">Cytoplasm</keyword>
<keyword id="KW-0671">Queuosine biosynthesis</keyword>
<keyword id="KW-1185">Reference proteome</keyword>
<keyword id="KW-0949">S-adenosyl-L-methionine</keyword>
<keyword id="KW-0808">Transferase</keyword>
<comment type="function">
    <text evidence="1">Transfers and isomerizes the ribose moiety from AdoMet to the 7-aminomethyl group of 7-deazaguanine (preQ1-tRNA) to give epoxyqueuosine (oQ-tRNA).</text>
</comment>
<comment type="catalytic activity">
    <reaction evidence="1">
        <text>7-aminomethyl-7-carbaguanosine(34) in tRNA + S-adenosyl-L-methionine = epoxyqueuosine(34) in tRNA + adenine + L-methionine + 2 H(+)</text>
        <dbReference type="Rhea" id="RHEA:32155"/>
        <dbReference type="Rhea" id="RHEA-COMP:10342"/>
        <dbReference type="Rhea" id="RHEA-COMP:18582"/>
        <dbReference type="ChEBI" id="CHEBI:15378"/>
        <dbReference type="ChEBI" id="CHEBI:16708"/>
        <dbReference type="ChEBI" id="CHEBI:57844"/>
        <dbReference type="ChEBI" id="CHEBI:59789"/>
        <dbReference type="ChEBI" id="CHEBI:82833"/>
        <dbReference type="ChEBI" id="CHEBI:194443"/>
        <dbReference type="EC" id="2.4.99.17"/>
    </reaction>
</comment>
<comment type="pathway">
    <text evidence="1">tRNA modification; tRNA-queuosine biosynthesis.</text>
</comment>
<comment type="subunit">
    <text evidence="1">Monomer.</text>
</comment>
<comment type="subcellular location">
    <subcellularLocation>
        <location evidence="1">Cytoplasm</location>
    </subcellularLocation>
</comment>
<comment type="similarity">
    <text evidence="1">Belongs to the QueA family.</text>
</comment>
<sequence>MKDDATGADFLLSGYDYELPEDRIAQHPPVERGLSRLLVLDRTTGERIHARFADLAEHLPEGALLVANNSKVLPARLLGHRPTGGKVEFLLLTPLPLVTPLAAGPASGTVEPGWCVAEVEGLLRASKPLRPGDTLSFGDDLRVEVVHKGEFGRSMVLLFWRGELATLFAREGHLPLPPYIRRADGDEDRDRYQTVFAREDRLGSVAAPTAGLHFTPSLRETLTARGHQWAEVTLYVGYGTFSPVRCADIRDHAMHREYVEVTAETVEVIRRAKADGRPVVAVGTTSCRVLEGVATAKGTLEPYAGWTDIFMYPGYTFKVVDHLITNFHLPESSLLMLVSAFAGRERVLATYREAIEEGYRFFSYGDAMLLR</sequence>
<proteinExistence type="inferred from homology"/>
<evidence type="ECO:0000255" key="1">
    <source>
        <dbReference type="HAMAP-Rule" id="MF_00113"/>
    </source>
</evidence>
<organism>
    <name type="scientific">Nitratidesulfovibrio vulgaris (strain ATCC 29579 / DSM 644 / CCUG 34227 / NCIMB 8303 / VKM B-1760 / Hildenborough)</name>
    <name type="common">Desulfovibrio vulgaris</name>
    <dbReference type="NCBI Taxonomy" id="882"/>
    <lineage>
        <taxon>Bacteria</taxon>
        <taxon>Pseudomonadati</taxon>
        <taxon>Thermodesulfobacteriota</taxon>
        <taxon>Desulfovibrionia</taxon>
        <taxon>Desulfovibrionales</taxon>
        <taxon>Desulfovibrionaceae</taxon>
        <taxon>Nitratidesulfovibrio</taxon>
    </lineage>
</organism>
<protein>
    <recommendedName>
        <fullName evidence="1">S-adenosylmethionine:tRNA ribosyltransferase-isomerase</fullName>
        <ecNumber evidence="1">2.4.99.17</ecNumber>
    </recommendedName>
    <alternativeName>
        <fullName evidence="1">Queuosine biosynthesis protein QueA</fullName>
    </alternativeName>
</protein>
<feature type="chain" id="PRO_0000231335" description="S-adenosylmethionine:tRNA ribosyltransferase-isomerase">
    <location>
        <begin position="1"/>
        <end position="371"/>
    </location>
</feature>
<accession>Q725S3</accession>
<name>QUEA_NITV2</name>
<reference key="1">
    <citation type="journal article" date="2004" name="Nat. Biotechnol.">
        <title>The genome sequence of the anaerobic, sulfate-reducing bacterium Desulfovibrio vulgaris Hildenborough.</title>
        <authorList>
            <person name="Heidelberg J.F."/>
            <person name="Seshadri R."/>
            <person name="Haveman S.A."/>
            <person name="Hemme C.L."/>
            <person name="Paulsen I.T."/>
            <person name="Kolonay J.F."/>
            <person name="Eisen J.A."/>
            <person name="Ward N.L."/>
            <person name="Methe B.A."/>
            <person name="Brinkac L.M."/>
            <person name="Daugherty S.C."/>
            <person name="DeBoy R.T."/>
            <person name="Dodson R.J."/>
            <person name="Durkin A.S."/>
            <person name="Madupu R."/>
            <person name="Nelson W.C."/>
            <person name="Sullivan S.A."/>
            <person name="Fouts D.E."/>
            <person name="Haft D.H."/>
            <person name="Selengut J."/>
            <person name="Peterson J.D."/>
            <person name="Davidsen T.M."/>
            <person name="Zafar N."/>
            <person name="Zhou L."/>
            <person name="Radune D."/>
            <person name="Dimitrov G."/>
            <person name="Hance M."/>
            <person name="Tran K."/>
            <person name="Khouri H.M."/>
            <person name="Gill J."/>
            <person name="Utterback T.R."/>
            <person name="Feldblyum T.V."/>
            <person name="Wall J.D."/>
            <person name="Voordouw G."/>
            <person name="Fraser C.M."/>
        </authorList>
    </citation>
    <scope>NUCLEOTIDE SEQUENCE [LARGE SCALE GENOMIC DNA]</scope>
    <source>
        <strain>ATCC 29579 / DSM 644 / CCUG 34227 / NCIMB 8303 / VKM B-1760 / Hildenborough</strain>
    </source>
</reference>
<gene>
    <name evidence="1" type="primary">queA</name>
    <name type="ordered locus">DVU_3351</name>
</gene>
<dbReference type="EC" id="2.4.99.17" evidence="1"/>
<dbReference type="EMBL" id="AE017285">
    <property type="protein sequence ID" value="AAS97820.1"/>
    <property type="molecule type" value="Genomic_DNA"/>
</dbReference>
<dbReference type="RefSeq" id="WP_010940607.1">
    <property type="nucleotide sequence ID" value="NC_002937.3"/>
</dbReference>
<dbReference type="RefSeq" id="YP_012560.1">
    <property type="nucleotide sequence ID" value="NC_002937.3"/>
</dbReference>
<dbReference type="SMR" id="Q725S3"/>
<dbReference type="IntAct" id="Q725S3">
    <property type="interactions" value="1"/>
</dbReference>
<dbReference type="STRING" id="882.DVU_3351"/>
<dbReference type="PaxDb" id="882-DVU_3351"/>
<dbReference type="EnsemblBacteria" id="AAS97820">
    <property type="protein sequence ID" value="AAS97820"/>
    <property type="gene ID" value="DVU_3351"/>
</dbReference>
<dbReference type="KEGG" id="dvu:DVU_3351"/>
<dbReference type="PATRIC" id="fig|882.5.peg.3041"/>
<dbReference type="eggNOG" id="COG0809">
    <property type="taxonomic scope" value="Bacteria"/>
</dbReference>
<dbReference type="HOGENOM" id="CLU_039110_1_0_7"/>
<dbReference type="OrthoDB" id="9805933at2"/>
<dbReference type="PhylomeDB" id="Q725S3"/>
<dbReference type="UniPathway" id="UPA00392"/>
<dbReference type="Proteomes" id="UP000002194">
    <property type="component" value="Chromosome"/>
</dbReference>
<dbReference type="GO" id="GO:0005737">
    <property type="term" value="C:cytoplasm"/>
    <property type="evidence" value="ECO:0007669"/>
    <property type="project" value="UniProtKB-SubCell"/>
</dbReference>
<dbReference type="GO" id="GO:0051075">
    <property type="term" value="F:S-adenosylmethionine:tRNA ribosyltransferase-isomerase activity"/>
    <property type="evidence" value="ECO:0007669"/>
    <property type="project" value="UniProtKB-EC"/>
</dbReference>
<dbReference type="GO" id="GO:0008616">
    <property type="term" value="P:queuosine biosynthetic process"/>
    <property type="evidence" value="ECO:0007669"/>
    <property type="project" value="UniProtKB-UniRule"/>
</dbReference>
<dbReference type="GO" id="GO:0002099">
    <property type="term" value="P:tRNA wobble guanine modification"/>
    <property type="evidence" value="ECO:0007669"/>
    <property type="project" value="TreeGrafter"/>
</dbReference>
<dbReference type="FunFam" id="3.40.1780.10:FF:000001">
    <property type="entry name" value="S-adenosylmethionine:tRNA ribosyltransferase-isomerase"/>
    <property type="match status" value="1"/>
</dbReference>
<dbReference type="Gene3D" id="2.40.10.240">
    <property type="entry name" value="QueA-like"/>
    <property type="match status" value="1"/>
</dbReference>
<dbReference type="Gene3D" id="3.40.1780.10">
    <property type="entry name" value="QueA-like"/>
    <property type="match status" value="1"/>
</dbReference>
<dbReference type="HAMAP" id="MF_00113">
    <property type="entry name" value="QueA"/>
    <property type="match status" value="1"/>
</dbReference>
<dbReference type="InterPro" id="IPR003699">
    <property type="entry name" value="QueA"/>
</dbReference>
<dbReference type="InterPro" id="IPR042118">
    <property type="entry name" value="QueA_dom1"/>
</dbReference>
<dbReference type="InterPro" id="IPR042119">
    <property type="entry name" value="QueA_dom2"/>
</dbReference>
<dbReference type="InterPro" id="IPR036100">
    <property type="entry name" value="QueA_sf"/>
</dbReference>
<dbReference type="NCBIfam" id="NF001140">
    <property type="entry name" value="PRK00147.1"/>
    <property type="match status" value="1"/>
</dbReference>
<dbReference type="NCBIfam" id="TIGR00113">
    <property type="entry name" value="queA"/>
    <property type="match status" value="1"/>
</dbReference>
<dbReference type="PANTHER" id="PTHR30307">
    <property type="entry name" value="S-ADENOSYLMETHIONINE:TRNA RIBOSYLTRANSFERASE-ISOMERASE"/>
    <property type="match status" value="1"/>
</dbReference>
<dbReference type="PANTHER" id="PTHR30307:SF0">
    <property type="entry name" value="S-ADENOSYLMETHIONINE:TRNA RIBOSYLTRANSFERASE-ISOMERASE"/>
    <property type="match status" value="1"/>
</dbReference>
<dbReference type="Pfam" id="PF02547">
    <property type="entry name" value="Queuosine_synth"/>
    <property type="match status" value="1"/>
</dbReference>
<dbReference type="SUPFAM" id="SSF111337">
    <property type="entry name" value="QueA-like"/>
    <property type="match status" value="1"/>
</dbReference>